<protein>
    <recommendedName>
        <fullName>NEDD8-activating enzyme E1 regulatory subunit</fullName>
    </recommendedName>
    <alternativeName>
        <fullName>Ubiquitin-activating enzyme E1-like 1</fullName>
    </alternativeName>
    <alternativeName>
        <fullName>Ubiquitin-like activation protein 1</fullName>
    </alternativeName>
</protein>
<comment type="function">
    <text evidence="1">Regulatory subunit of the dimeric uba3-ula1 E1 enzyme. E1 activates NEDD8/ubl1 by first adenylating its C-terminal glycine residue with ATP, thereafter linking this residue to the side chain of the catalytic cysteine, yielding a NEDD8-UBA3 thioester and free AMP. E1 finally transfers NEDD8 to the catalytic cysteine of ubc12 (By similarity).</text>
</comment>
<comment type="pathway">
    <text>Protein modification; protein neddylation.</text>
</comment>
<comment type="subunit">
    <text evidence="1">Heterodimer of uba3 and ula1. The complex binds NEDD8/ubl1 and ubc12 (By similarity).</text>
</comment>
<comment type="subcellular location">
    <subcellularLocation>
        <location evidence="2">Cytoplasm</location>
    </subcellularLocation>
    <subcellularLocation>
        <location evidence="2">Nucleus</location>
    </subcellularLocation>
</comment>
<comment type="similarity">
    <text evidence="3">Belongs to the ubiquitin-activating E1 family. ULA1 subfamily.</text>
</comment>
<keyword id="KW-0067">ATP-binding</keyword>
<keyword id="KW-0963">Cytoplasm</keyword>
<keyword id="KW-0547">Nucleotide-binding</keyword>
<keyword id="KW-0539">Nucleus</keyword>
<keyword id="KW-1185">Reference proteome</keyword>
<keyword id="KW-0833">Ubl conjugation pathway</keyword>
<accession>Q9UT93</accession>
<organism>
    <name type="scientific">Schizosaccharomyces pombe (strain 972 / ATCC 24843)</name>
    <name type="common">Fission yeast</name>
    <dbReference type="NCBI Taxonomy" id="284812"/>
    <lineage>
        <taxon>Eukaryota</taxon>
        <taxon>Fungi</taxon>
        <taxon>Dikarya</taxon>
        <taxon>Ascomycota</taxon>
        <taxon>Taphrinomycotina</taxon>
        <taxon>Schizosaccharomycetes</taxon>
        <taxon>Schizosaccharomycetales</taxon>
        <taxon>Schizosaccharomycetaceae</taxon>
        <taxon>Schizosaccharomyces</taxon>
    </lineage>
</organism>
<feature type="chain" id="PRO_0000194961" description="NEDD8-activating enzyme E1 regulatory subunit">
    <location>
        <begin position="1"/>
        <end position="517"/>
    </location>
</feature>
<sequence>MGTSAKMQKYDRQVRLWKAEGQNAIEKSHVCLLYANTVGCEALKNLILPGIGSFAVVDDTSVDFSMDGMNFFIQYDQEGKSRARCTASLLQQLNPNVEMEYLEMSPEALIDKNIEYFSKFSVVLSSNLKEKPLFRLEEYLRSHKIPLLHFNSVGFAGILRISTHEYTTTQSQPELPQDLRLKNPWPELINYVKSMDLDNMDSSSLSEIPYIVLIIHVLLKVSPAHAQNSQEADDCAMFRKIMEEYKGKCDSENIEEASSNSWKAFKEYKLPSNVYEVLHDTRCVKIQEDSESFWIMAHCLKMFYDETEFLPLSGLLPDMNCSTQQYVKLQVIYKEKSENDILKFKKYVQQTLKRLNRSVEEITDLEIKHFSRNCLNIKVMDFKTMKEEYQPTSNSVLESSSIDSNSLLPWYLAFRIYDTILEKHGKNYKEAFSDTTKTISVAQSFLSQIGLEKFFDVVYTAIQELERADGHELHSISSFIGGIVAQETIKLLAQQYLPLNNTFVFDGVHSRTETFKL</sequence>
<name>ULA1_SCHPO</name>
<reference key="1">
    <citation type="journal article" date="2002" name="Nature">
        <title>The genome sequence of Schizosaccharomyces pombe.</title>
        <authorList>
            <person name="Wood V."/>
            <person name="Gwilliam R."/>
            <person name="Rajandream M.A."/>
            <person name="Lyne M.H."/>
            <person name="Lyne R."/>
            <person name="Stewart A."/>
            <person name="Sgouros J.G."/>
            <person name="Peat N."/>
            <person name="Hayles J."/>
            <person name="Baker S.G."/>
            <person name="Basham D."/>
            <person name="Bowman S."/>
            <person name="Brooks K."/>
            <person name="Brown D."/>
            <person name="Brown S."/>
            <person name="Chillingworth T."/>
            <person name="Churcher C.M."/>
            <person name="Collins M."/>
            <person name="Connor R."/>
            <person name="Cronin A."/>
            <person name="Davis P."/>
            <person name="Feltwell T."/>
            <person name="Fraser A."/>
            <person name="Gentles S."/>
            <person name="Goble A."/>
            <person name="Hamlin N."/>
            <person name="Harris D.E."/>
            <person name="Hidalgo J."/>
            <person name="Hodgson G."/>
            <person name="Holroyd S."/>
            <person name="Hornsby T."/>
            <person name="Howarth S."/>
            <person name="Huckle E.J."/>
            <person name="Hunt S."/>
            <person name="Jagels K."/>
            <person name="James K.D."/>
            <person name="Jones L."/>
            <person name="Jones M."/>
            <person name="Leather S."/>
            <person name="McDonald S."/>
            <person name="McLean J."/>
            <person name="Mooney P."/>
            <person name="Moule S."/>
            <person name="Mungall K.L."/>
            <person name="Murphy L.D."/>
            <person name="Niblett D."/>
            <person name="Odell C."/>
            <person name="Oliver K."/>
            <person name="O'Neil S."/>
            <person name="Pearson D."/>
            <person name="Quail M.A."/>
            <person name="Rabbinowitsch E."/>
            <person name="Rutherford K.M."/>
            <person name="Rutter S."/>
            <person name="Saunders D."/>
            <person name="Seeger K."/>
            <person name="Sharp S."/>
            <person name="Skelton J."/>
            <person name="Simmonds M.N."/>
            <person name="Squares R."/>
            <person name="Squares S."/>
            <person name="Stevens K."/>
            <person name="Taylor K."/>
            <person name="Taylor R.G."/>
            <person name="Tivey A."/>
            <person name="Walsh S.V."/>
            <person name="Warren T."/>
            <person name="Whitehead S."/>
            <person name="Woodward J.R."/>
            <person name="Volckaert G."/>
            <person name="Aert R."/>
            <person name="Robben J."/>
            <person name="Grymonprez B."/>
            <person name="Weltjens I."/>
            <person name="Vanstreels E."/>
            <person name="Rieger M."/>
            <person name="Schaefer M."/>
            <person name="Mueller-Auer S."/>
            <person name="Gabel C."/>
            <person name="Fuchs M."/>
            <person name="Duesterhoeft A."/>
            <person name="Fritzc C."/>
            <person name="Holzer E."/>
            <person name="Moestl D."/>
            <person name="Hilbert H."/>
            <person name="Borzym K."/>
            <person name="Langer I."/>
            <person name="Beck A."/>
            <person name="Lehrach H."/>
            <person name="Reinhardt R."/>
            <person name="Pohl T.M."/>
            <person name="Eger P."/>
            <person name="Zimmermann W."/>
            <person name="Wedler H."/>
            <person name="Wambutt R."/>
            <person name="Purnelle B."/>
            <person name="Goffeau A."/>
            <person name="Cadieu E."/>
            <person name="Dreano S."/>
            <person name="Gloux S."/>
            <person name="Lelaure V."/>
            <person name="Mottier S."/>
            <person name="Galibert F."/>
            <person name="Aves S.J."/>
            <person name="Xiang Z."/>
            <person name="Hunt C."/>
            <person name="Moore K."/>
            <person name="Hurst S.M."/>
            <person name="Lucas M."/>
            <person name="Rochet M."/>
            <person name="Gaillardin C."/>
            <person name="Tallada V.A."/>
            <person name="Garzon A."/>
            <person name="Thode G."/>
            <person name="Daga R.R."/>
            <person name="Cruzado L."/>
            <person name="Jimenez J."/>
            <person name="Sanchez M."/>
            <person name="del Rey F."/>
            <person name="Benito J."/>
            <person name="Dominguez A."/>
            <person name="Revuelta J.L."/>
            <person name="Moreno S."/>
            <person name="Armstrong J."/>
            <person name="Forsburg S.L."/>
            <person name="Cerutti L."/>
            <person name="Lowe T."/>
            <person name="McCombie W.R."/>
            <person name="Paulsen I."/>
            <person name="Potashkin J."/>
            <person name="Shpakovski G.V."/>
            <person name="Ussery D."/>
            <person name="Barrell B.G."/>
            <person name="Nurse P."/>
        </authorList>
    </citation>
    <scope>NUCLEOTIDE SEQUENCE [LARGE SCALE GENOMIC DNA]</scope>
    <source>
        <strain>972 / ATCC 24843</strain>
    </source>
</reference>
<reference key="2">
    <citation type="journal article" date="2011" name="Science">
        <title>Comparative functional genomics of the fission yeasts.</title>
        <authorList>
            <person name="Rhind N."/>
            <person name="Chen Z."/>
            <person name="Yassour M."/>
            <person name="Thompson D.A."/>
            <person name="Haas B.J."/>
            <person name="Habib N."/>
            <person name="Wapinski I."/>
            <person name="Roy S."/>
            <person name="Lin M.F."/>
            <person name="Heiman D.I."/>
            <person name="Young S.K."/>
            <person name="Furuya K."/>
            <person name="Guo Y."/>
            <person name="Pidoux A."/>
            <person name="Chen H.M."/>
            <person name="Robbertse B."/>
            <person name="Goldberg J.M."/>
            <person name="Aoki K."/>
            <person name="Bayne E.H."/>
            <person name="Berlin A.M."/>
            <person name="Desjardins C.A."/>
            <person name="Dobbs E."/>
            <person name="Dukaj L."/>
            <person name="Fan L."/>
            <person name="FitzGerald M.G."/>
            <person name="French C."/>
            <person name="Gujja S."/>
            <person name="Hansen K."/>
            <person name="Keifenheim D."/>
            <person name="Levin J.Z."/>
            <person name="Mosher R.A."/>
            <person name="Mueller C.A."/>
            <person name="Pfiffner J."/>
            <person name="Priest M."/>
            <person name="Russ C."/>
            <person name="Smialowska A."/>
            <person name="Swoboda P."/>
            <person name="Sykes S.M."/>
            <person name="Vaughn M."/>
            <person name="Vengrova S."/>
            <person name="Yoder R."/>
            <person name="Zeng Q."/>
            <person name="Allshire R."/>
            <person name="Baulcombe D."/>
            <person name="Birren B.W."/>
            <person name="Brown W."/>
            <person name="Ekwall K."/>
            <person name="Kellis M."/>
            <person name="Leatherwood J."/>
            <person name="Levin H."/>
            <person name="Margalit H."/>
            <person name="Martienssen R."/>
            <person name="Nieduszynski C.A."/>
            <person name="Spatafora J.W."/>
            <person name="Friedman N."/>
            <person name="Dalgaard J.Z."/>
            <person name="Baumann P."/>
            <person name="Niki H."/>
            <person name="Regev A."/>
            <person name="Nusbaum C."/>
        </authorList>
    </citation>
    <scope>REVISION OF GENE MODEL</scope>
</reference>
<reference key="3">
    <citation type="journal article" date="2006" name="Nat. Biotechnol.">
        <title>ORFeome cloning and global analysis of protein localization in the fission yeast Schizosaccharomyces pombe.</title>
        <authorList>
            <person name="Matsuyama A."/>
            <person name="Arai R."/>
            <person name="Yashiroda Y."/>
            <person name="Shirai A."/>
            <person name="Kamata A."/>
            <person name="Sekido S."/>
            <person name="Kobayashi Y."/>
            <person name="Hashimoto A."/>
            <person name="Hamamoto M."/>
            <person name="Hiraoka Y."/>
            <person name="Horinouchi S."/>
            <person name="Yoshida M."/>
        </authorList>
    </citation>
    <scope>SUBCELLULAR LOCATION [LARGE SCALE ANALYSIS]</scope>
</reference>
<evidence type="ECO:0000250" key="1"/>
<evidence type="ECO:0000269" key="2">
    <source>
    </source>
</evidence>
<evidence type="ECO:0000305" key="3"/>
<dbReference type="EMBL" id="CU329670">
    <property type="protein sequence ID" value="CAB53409.3"/>
    <property type="molecule type" value="Genomic_DNA"/>
</dbReference>
<dbReference type="PIR" id="T38643">
    <property type="entry name" value="T38643"/>
</dbReference>
<dbReference type="RefSeq" id="NP_594376.2">
    <property type="nucleotide sequence ID" value="NM_001019797.2"/>
</dbReference>
<dbReference type="SMR" id="Q9UT93"/>
<dbReference type="BioGRID" id="279508">
    <property type="interactions" value="2"/>
</dbReference>
<dbReference type="FunCoup" id="Q9UT93">
    <property type="interactions" value="1022"/>
</dbReference>
<dbReference type="STRING" id="284812.Q9UT93"/>
<dbReference type="iPTMnet" id="Q9UT93"/>
<dbReference type="PaxDb" id="4896-SPAC323.06c.1"/>
<dbReference type="EnsemblFungi" id="SPAC323.06c.1">
    <property type="protein sequence ID" value="SPAC323.06c.1:pep"/>
    <property type="gene ID" value="SPAC323.06c"/>
</dbReference>
<dbReference type="GeneID" id="2543075"/>
<dbReference type="KEGG" id="spo:2543075"/>
<dbReference type="PomBase" id="SPAC323.06c">
    <property type="gene designation" value="uba5"/>
</dbReference>
<dbReference type="VEuPathDB" id="FungiDB:SPAC323.06c"/>
<dbReference type="eggNOG" id="KOG2016">
    <property type="taxonomic scope" value="Eukaryota"/>
</dbReference>
<dbReference type="HOGENOM" id="CLU_019618_2_1_1"/>
<dbReference type="InParanoid" id="Q9UT93"/>
<dbReference type="OMA" id="KLITHQY"/>
<dbReference type="Reactome" id="R-SPO-8951664">
    <property type="pathway name" value="Neddylation"/>
</dbReference>
<dbReference type="UniPathway" id="UPA00885"/>
<dbReference type="PRO" id="PR:Q9UT93"/>
<dbReference type="Proteomes" id="UP000002485">
    <property type="component" value="Chromosome I"/>
</dbReference>
<dbReference type="GO" id="GO:0005737">
    <property type="term" value="C:cytoplasm"/>
    <property type="evidence" value="ECO:0000318"/>
    <property type="project" value="GO_Central"/>
</dbReference>
<dbReference type="GO" id="GO:0005829">
    <property type="term" value="C:cytosol"/>
    <property type="evidence" value="ECO:0007005"/>
    <property type="project" value="PomBase"/>
</dbReference>
<dbReference type="GO" id="GO:0005634">
    <property type="term" value="C:nucleus"/>
    <property type="evidence" value="ECO:0007005"/>
    <property type="project" value="PomBase"/>
</dbReference>
<dbReference type="GO" id="GO:0005524">
    <property type="term" value="F:ATP binding"/>
    <property type="evidence" value="ECO:0007669"/>
    <property type="project" value="UniProtKB-KW"/>
</dbReference>
<dbReference type="GO" id="GO:0016887">
    <property type="term" value="F:ATP hydrolysis activity"/>
    <property type="evidence" value="ECO:0000305"/>
    <property type="project" value="PomBase"/>
</dbReference>
<dbReference type="GO" id="GO:0019781">
    <property type="term" value="F:NEDD8 activating enzyme activity"/>
    <property type="evidence" value="ECO:0000318"/>
    <property type="project" value="GO_Central"/>
</dbReference>
<dbReference type="GO" id="GO:0045116">
    <property type="term" value="P:protein neddylation"/>
    <property type="evidence" value="ECO:0000318"/>
    <property type="project" value="GO_Central"/>
</dbReference>
<dbReference type="CDD" id="cd01493">
    <property type="entry name" value="APPBP1_RUB"/>
    <property type="match status" value="1"/>
</dbReference>
<dbReference type="FunFam" id="3.40.50.720:FF:000475">
    <property type="entry name" value="NEDD8-activating enzyme E1 regulatory subunit"/>
    <property type="match status" value="1"/>
</dbReference>
<dbReference type="FunFam" id="3.40.50.720:FF:000860">
    <property type="entry name" value="NEDD8-activating enzyme E1 regulatory subunit"/>
    <property type="match status" value="1"/>
</dbReference>
<dbReference type="Gene3D" id="3.40.50.720">
    <property type="entry name" value="NAD(P)-binding Rossmann-like Domain"/>
    <property type="match status" value="2"/>
</dbReference>
<dbReference type="InterPro" id="IPR030667">
    <property type="entry name" value="APP-BP1"/>
</dbReference>
<dbReference type="InterPro" id="IPR045886">
    <property type="entry name" value="ThiF/MoeB/HesA"/>
</dbReference>
<dbReference type="InterPro" id="IPR000594">
    <property type="entry name" value="ThiF_NAD_FAD-bd"/>
</dbReference>
<dbReference type="InterPro" id="IPR035985">
    <property type="entry name" value="Ubiquitin-activating_enz"/>
</dbReference>
<dbReference type="PANTHER" id="PTHR10953:SF29">
    <property type="entry name" value="NEDD8-ACTIVATING ENZYME E1 REGULATORY SUBUNIT"/>
    <property type="match status" value="1"/>
</dbReference>
<dbReference type="PANTHER" id="PTHR10953">
    <property type="entry name" value="UBIQUITIN-ACTIVATING ENZYME E1"/>
    <property type="match status" value="1"/>
</dbReference>
<dbReference type="Pfam" id="PF00899">
    <property type="entry name" value="ThiF"/>
    <property type="match status" value="1"/>
</dbReference>
<dbReference type="PIRSF" id="PIRSF039099">
    <property type="entry name" value="APP-BP1"/>
    <property type="match status" value="1"/>
</dbReference>
<dbReference type="SUPFAM" id="SSF69572">
    <property type="entry name" value="Activating enzymes of the ubiquitin-like proteins"/>
    <property type="match status" value="1"/>
</dbReference>
<gene>
    <name type="primary">uba5</name>
    <name type="synonym">ula1</name>
    <name type="ORF">SPAC323.06c</name>
</gene>
<proteinExistence type="inferred from homology"/>